<sequence>MTDLNKHIKQAQTQRKQLLEESRELHREKLLVQAENRFFLEYLTNKTEEYTEQPEKVWNSYLQKSGEIERRRQESASRYAEQISVLKTALLQKENIQSSLKRKLQAMRDIAILKEKQEKEIQTLQEETKKVQAETASKTREVQAQLLQEKRLLEKQLSEPDRRLLGKRKRRELNMKAQALKLAAKRFIFEYSCGINRENQQFKKELLQLIEQAQKLTATQSHLENRKQQLQQEQWYLESLIQARQRLQGSHNQCLNRQDVPKTTPSLPQGTKSRINPK</sequence>
<comment type="interaction">
    <interactant intactId="EBI-2836982">
        <id>Q6ZUS5</id>
    </interactant>
    <interactant intactId="EBI-347978">
        <id>P37198</id>
        <label>NUP62</label>
    </interactant>
    <organismsDiffer>false</organismsDiffer>
    <experiments>4</experiments>
</comment>
<comment type="interaction">
    <interactant intactId="EBI-2836982">
        <id>Q6ZUS5</id>
    </interactant>
    <interactant intactId="EBI-726876">
        <id>Q6NUQ1</id>
        <label>RINT1</label>
    </interactant>
    <organismsDiffer>false</organismsDiffer>
    <experiments>4</experiments>
</comment>
<comment type="interaction">
    <interactant intactId="EBI-2836982">
        <id>Q6ZUS5</id>
    </interactant>
    <interactant intactId="EBI-1105213">
        <id>Q9UBB9</id>
        <label>TFIP11</label>
    </interactant>
    <organismsDiffer>false</organismsDiffer>
    <experiments>7</experiments>
</comment>
<comment type="interaction">
    <interactant intactId="EBI-2836982">
        <id>Q6ZUS5</id>
    </interactant>
    <interactant intactId="EBI-739895">
        <id>Q8N6Y0</id>
        <label>USHBP1</label>
    </interactant>
    <organismsDiffer>false</organismsDiffer>
    <experiments>3</experiments>
</comment>
<comment type="alternative products">
    <event type="alternative splicing"/>
    <isoform>
        <id>Q6ZUS5-1</id>
        <name>1</name>
        <sequence type="displayed"/>
    </isoform>
    <isoform>
        <id>Q6ZUS5-2</id>
        <name>2</name>
        <sequence type="described" ref="VSP_046649"/>
    </isoform>
</comment>
<comment type="sequence caution" evidence="3">
    <conflict type="erroneous initiation">
        <sequence resource="EMBL-CDS" id="AAX93200"/>
    </conflict>
</comment>
<comment type="sequence caution" evidence="3">
    <conflict type="erroneous initiation">
        <sequence resource="EMBL-CDS" id="BAB14651"/>
    </conflict>
</comment>
<evidence type="ECO:0000255" key="1"/>
<evidence type="ECO:0000256" key="2">
    <source>
        <dbReference type="SAM" id="MobiDB-lite"/>
    </source>
</evidence>
<evidence type="ECO:0000305" key="3"/>
<name>CC121_HUMAN</name>
<feature type="chain" id="PRO_0000286559" description="Coiled-coil domain-containing protein 121">
    <location>
        <begin position="1"/>
        <end position="278"/>
    </location>
</feature>
<feature type="region of interest" description="Disordered" evidence="2">
    <location>
        <begin position="253"/>
        <end position="278"/>
    </location>
</feature>
<feature type="coiled-coil region" evidence="1">
    <location>
        <begin position="1"/>
        <end position="30"/>
    </location>
</feature>
<feature type="coiled-coil region" evidence="1">
    <location>
        <begin position="105"/>
        <end position="243"/>
    </location>
</feature>
<feature type="splice variant" id="VSP_046649" description="In isoform 2." evidence="3">
    <original>M</original>
    <variation>MGSRGQGSHSKKTRSMPVILSPQRTGSGATGGPAARAYSVAEAVKQFRAGPAGTGAGCSLQGCWAAPRPFEHRTNKLRELSTLAHCSRELQTQVPDASAHSLAVTLSELHSCRDLQDECLDSRFAEGPRRLLPPYHSLINNFVKPEKLTKVETRLKEKIVAEM</variation>
    <location>
        <position position="1"/>
    </location>
</feature>
<protein>
    <recommendedName>
        <fullName>Coiled-coil domain-containing protein 121</fullName>
    </recommendedName>
</protein>
<reference key="1">
    <citation type="journal article" date="2004" name="Nat. Genet.">
        <title>Complete sequencing and characterization of 21,243 full-length human cDNAs.</title>
        <authorList>
            <person name="Ota T."/>
            <person name="Suzuki Y."/>
            <person name="Nishikawa T."/>
            <person name="Otsuki T."/>
            <person name="Sugiyama T."/>
            <person name="Irie R."/>
            <person name="Wakamatsu A."/>
            <person name="Hayashi K."/>
            <person name="Sato H."/>
            <person name="Nagai K."/>
            <person name="Kimura K."/>
            <person name="Makita H."/>
            <person name="Sekine M."/>
            <person name="Obayashi M."/>
            <person name="Nishi T."/>
            <person name="Shibahara T."/>
            <person name="Tanaka T."/>
            <person name="Ishii S."/>
            <person name="Yamamoto J."/>
            <person name="Saito K."/>
            <person name="Kawai Y."/>
            <person name="Isono Y."/>
            <person name="Nakamura Y."/>
            <person name="Nagahari K."/>
            <person name="Murakami K."/>
            <person name="Yasuda T."/>
            <person name="Iwayanagi T."/>
            <person name="Wagatsuma M."/>
            <person name="Shiratori A."/>
            <person name="Sudo H."/>
            <person name="Hosoiri T."/>
            <person name="Kaku Y."/>
            <person name="Kodaira H."/>
            <person name="Kondo H."/>
            <person name="Sugawara M."/>
            <person name="Takahashi M."/>
            <person name="Kanda K."/>
            <person name="Yokoi T."/>
            <person name="Furuya T."/>
            <person name="Kikkawa E."/>
            <person name="Omura Y."/>
            <person name="Abe K."/>
            <person name="Kamihara K."/>
            <person name="Katsuta N."/>
            <person name="Sato K."/>
            <person name="Tanikawa M."/>
            <person name="Yamazaki M."/>
            <person name="Ninomiya K."/>
            <person name="Ishibashi T."/>
            <person name="Yamashita H."/>
            <person name="Murakawa K."/>
            <person name="Fujimori K."/>
            <person name="Tanai H."/>
            <person name="Kimata M."/>
            <person name="Watanabe M."/>
            <person name="Hiraoka S."/>
            <person name="Chiba Y."/>
            <person name="Ishida S."/>
            <person name="Ono Y."/>
            <person name="Takiguchi S."/>
            <person name="Watanabe S."/>
            <person name="Yosida M."/>
            <person name="Hotuta T."/>
            <person name="Kusano J."/>
            <person name="Kanehori K."/>
            <person name="Takahashi-Fujii A."/>
            <person name="Hara H."/>
            <person name="Tanase T.-O."/>
            <person name="Nomura Y."/>
            <person name="Togiya S."/>
            <person name="Komai F."/>
            <person name="Hara R."/>
            <person name="Takeuchi K."/>
            <person name="Arita M."/>
            <person name="Imose N."/>
            <person name="Musashino K."/>
            <person name="Yuuki H."/>
            <person name="Oshima A."/>
            <person name="Sasaki N."/>
            <person name="Aotsuka S."/>
            <person name="Yoshikawa Y."/>
            <person name="Matsunawa H."/>
            <person name="Ichihara T."/>
            <person name="Shiohata N."/>
            <person name="Sano S."/>
            <person name="Moriya S."/>
            <person name="Momiyama H."/>
            <person name="Satoh N."/>
            <person name="Takami S."/>
            <person name="Terashima Y."/>
            <person name="Suzuki O."/>
            <person name="Nakagawa S."/>
            <person name="Senoh A."/>
            <person name="Mizoguchi H."/>
            <person name="Goto Y."/>
            <person name="Shimizu F."/>
            <person name="Wakebe H."/>
            <person name="Hishigaki H."/>
            <person name="Watanabe T."/>
            <person name="Sugiyama A."/>
            <person name="Takemoto M."/>
            <person name="Kawakami B."/>
            <person name="Yamazaki M."/>
            <person name="Watanabe K."/>
            <person name="Kumagai A."/>
            <person name="Itakura S."/>
            <person name="Fukuzumi Y."/>
            <person name="Fujimori Y."/>
            <person name="Komiyama M."/>
            <person name="Tashiro H."/>
            <person name="Tanigami A."/>
            <person name="Fujiwara T."/>
            <person name="Ono T."/>
            <person name="Yamada K."/>
            <person name="Fujii Y."/>
            <person name="Ozaki K."/>
            <person name="Hirao M."/>
            <person name="Ohmori Y."/>
            <person name="Kawabata A."/>
            <person name="Hikiji T."/>
            <person name="Kobatake N."/>
            <person name="Inagaki H."/>
            <person name="Ikema Y."/>
            <person name="Okamoto S."/>
            <person name="Okitani R."/>
            <person name="Kawakami T."/>
            <person name="Noguchi S."/>
            <person name="Itoh T."/>
            <person name="Shigeta K."/>
            <person name="Senba T."/>
            <person name="Matsumura K."/>
            <person name="Nakajima Y."/>
            <person name="Mizuno T."/>
            <person name="Morinaga M."/>
            <person name="Sasaki M."/>
            <person name="Togashi T."/>
            <person name="Oyama M."/>
            <person name="Hata H."/>
            <person name="Watanabe M."/>
            <person name="Komatsu T."/>
            <person name="Mizushima-Sugano J."/>
            <person name="Satoh T."/>
            <person name="Shirai Y."/>
            <person name="Takahashi Y."/>
            <person name="Nakagawa K."/>
            <person name="Okumura K."/>
            <person name="Nagase T."/>
            <person name="Nomura N."/>
            <person name="Kikuchi H."/>
            <person name="Masuho Y."/>
            <person name="Yamashita R."/>
            <person name="Nakai K."/>
            <person name="Yada T."/>
            <person name="Nakamura Y."/>
            <person name="Ohara O."/>
            <person name="Isogai T."/>
            <person name="Sugano S."/>
        </authorList>
    </citation>
    <scope>NUCLEOTIDE SEQUENCE [LARGE SCALE MRNA] (ISOFORM 1)</scope>
    <source>
        <tissue>Placenta</tissue>
        <tissue>Uterus</tissue>
    </source>
</reference>
<reference key="2">
    <citation type="journal article" date="2005" name="Nature">
        <title>Generation and annotation of the DNA sequences of human chromosomes 2 and 4.</title>
        <authorList>
            <person name="Hillier L.W."/>
            <person name="Graves T.A."/>
            <person name="Fulton R.S."/>
            <person name="Fulton L.A."/>
            <person name="Pepin K.H."/>
            <person name="Minx P."/>
            <person name="Wagner-McPherson C."/>
            <person name="Layman D."/>
            <person name="Wylie K."/>
            <person name="Sekhon M."/>
            <person name="Becker M.C."/>
            <person name="Fewell G.A."/>
            <person name="Delehaunty K.D."/>
            <person name="Miner T.L."/>
            <person name="Nash W.E."/>
            <person name="Kremitzki C."/>
            <person name="Oddy L."/>
            <person name="Du H."/>
            <person name="Sun H."/>
            <person name="Bradshaw-Cordum H."/>
            <person name="Ali J."/>
            <person name="Carter J."/>
            <person name="Cordes M."/>
            <person name="Harris A."/>
            <person name="Isak A."/>
            <person name="van Brunt A."/>
            <person name="Nguyen C."/>
            <person name="Du F."/>
            <person name="Courtney L."/>
            <person name="Kalicki J."/>
            <person name="Ozersky P."/>
            <person name="Abbott S."/>
            <person name="Armstrong J."/>
            <person name="Belter E.A."/>
            <person name="Caruso L."/>
            <person name="Cedroni M."/>
            <person name="Cotton M."/>
            <person name="Davidson T."/>
            <person name="Desai A."/>
            <person name="Elliott G."/>
            <person name="Erb T."/>
            <person name="Fronick C."/>
            <person name="Gaige T."/>
            <person name="Haakenson W."/>
            <person name="Haglund K."/>
            <person name="Holmes A."/>
            <person name="Harkins R."/>
            <person name="Kim K."/>
            <person name="Kruchowski S.S."/>
            <person name="Strong C.M."/>
            <person name="Grewal N."/>
            <person name="Goyea E."/>
            <person name="Hou S."/>
            <person name="Levy A."/>
            <person name="Martinka S."/>
            <person name="Mead K."/>
            <person name="McLellan M.D."/>
            <person name="Meyer R."/>
            <person name="Randall-Maher J."/>
            <person name="Tomlinson C."/>
            <person name="Dauphin-Kohlberg S."/>
            <person name="Kozlowicz-Reilly A."/>
            <person name="Shah N."/>
            <person name="Swearengen-Shahid S."/>
            <person name="Snider J."/>
            <person name="Strong J.T."/>
            <person name="Thompson J."/>
            <person name="Yoakum M."/>
            <person name="Leonard S."/>
            <person name="Pearman C."/>
            <person name="Trani L."/>
            <person name="Radionenko M."/>
            <person name="Waligorski J.E."/>
            <person name="Wang C."/>
            <person name="Rock S.M."/>
            <person name="Tin-Wollam A.-M."/>
            <person name="Maupin R."/>
            <person name="Latreille P."/>
            <person name="Wendl M.C."/>
            <person name="Yang S.-P."/>
            <person name="Pohl C."/>
            <person name="Wallis J.W."/>
            <person name="Spieth J."/>
            <person name="Bieri T.A."/>
            <person name="Berkowicz N."/>
            <person name="Nelson J.O."/>
            <person name="Osborne J."/>
            <person name="Ding L."/>
            <person name="Meyer R."/>
            <person name="Sabo A."/>
            <person name="Shotland Y."/>
            <person name="Sinha P."/>
            <person name="Wohldmann P.E."/>
            <person name="Cook L.L."/>
            <person name="Hickenbotham M.T."/>
            <person name="Eldred J."/>
            <person name="Williams D."/>
            <person name="Jones T.A."/>
            <person name="She X."/>
            <person name="Ciccarelli F.D."/>
            <person name="Izaurralde E."/>
            <person name="Taylor J."/>
            <person name="Schmutz J."/>
            <person name="Myers R.M."/>
            <person name="Cox D.R."/>
            <person name="Huang X."/>
            <person name="McPherson J.D."/>
            <person name="Mardis E.R."/>
            <person name="Clifton S.W."/>
            <person name="Warren W.C."/>
            <person name="Chinwalla A.T."/>
            <person name="Eddy S.R."/>
            <person name="Marra M.A."/>
            <person name="Ovcharenko I."/>
            <person name="Furey T.S."/>
            <person name="Miller W."/>
            <person name="Eichler E.E."/>
            <person name="Bork P."/>
            <person name="Suyama M."/>
            <person name="Torrents D."/>
            <person name="Waterston R.H."/>
            <person name="Wilson R.K."/>
        </authorList>
    </citation>
    <scope>NUCLEOTIDE SEQUENCE [LARGE SCALE GENOMIC DNA]</scope>
</reference>
<reference key="3">
    <citation type="submission" date="2005-09" db="EMBL/GenBank/DDBJ databases">
        <authorList>
            <person name="Mural R.J."/>
            <person name="Istrail S."/>
            <person name="Sutton G.G."/>
            <person name="Florea L."/>
            <person name="Halpern A.L."/>
            <person name="Mobarry C.M."/>
            <person name="Lippert R."/>
            <person name="Walenz B."/>
            <person name="Shatkay H."/>
            <person name="Dew I."/>
            <person name="Miller J.R."/>
            <person name="Flanigan M.J."/>
            <person name="Edwards N.J."/>
            <person name="Bolanos R."/>
            <person name="Fasulo D."/>
            <person name="Halldorsson B.V."/>
            <person name="Hannenhalli S."/>
            <person name="Turner R."/>
            <person name="Yooseph S."/>
            <person name="Lu F."/>
            <person name="Nusskern D.R."/>
            <person name="Shue B.C."/>
            <person name="Zheng X.H."/>
            <person name="Zhong F."/>
            <person name="Delcher A.L."/>
            <person name="Huson D.H."/>
            <person name="Kravitz S.A."/>
            <person name="Mouchard L."/>
            <person name="Reinert K."/>
            <person name="Remington K.A."/>
            <person name="Clark A.G."/>
            <person name="Waterman M.S."/>
            <person name="Eichler E.E."/>
            <person name="Adams M.D."/>
            <person name="Hunkapiller M.W."/>
            <person name="Myers E.W."/>
            <person name="Venter J.C."/>
        </authorList>
    </citation>
    <scope>NUCLEOTIDE SEQUENCE [LARGE SCALE GENOMIC DNA]</scope>
</reference>
<reference key="4">
    <citation type="journal article" date="2004" name="Genome Res.">
        <title>The status, quality, and expansion of the NIH full-length cDNA project: the Mammalian Gene Collection (MGC).</title>
        <authorList>
            <consortium name="The MGC Project Team"/>
        </authorList>
    </citation>
    <scope>NUCLEOTIDE SEQUENCE [LARGE SCALE MRNA] (ISOFORM 1)</scope>
    <source>
        <tissue>Brain</tissue>
        <tissue>Testis</tissue>
    </source>
</reference>
<proteinExistence type="evidence at protein level"/>
<dbReference type="EMBL" id="AK023708">
    <property type="protein sequence ID" value="BAB14651.1"/>
    <property type="status" value="ALT_INIT"/>
    <property type="molecule type" value="mRNA"/>
</dbReference>
<dbReference type="EMBL" id="AK124337">
    <property type="protein sequence ID" value="BAG54028.1"/>
    <property type="molecule type" value="mRNA"/>
</dbReference>
<dbReference type="EMBL" id="AK125354">
    <property type="protein sequence ID" value="BAC86143.1"/>
    <property type="molecule type" value="mRNA"/>
</dbReference>
<dbReference type="EMBL" id="AC074091">
    <property type="protein sequence ID" value="AAX93200.1"/>
    <property type="status" value="ALT_INIT"/>
    <property type="molecule type" value="Genomic_DNA"/>
</dbReference>
<dbReference type="EMBL" id="CH471053">
    <property type="protein sequence ID" value="EAX00560.1"/>
    <property type="molecule type" value="Genomic_DNA"/>
</dbReference>
<dbReference type="EMBL" id="CH471053">
    <property type="protein sequence ID" value="EAX00561.1"/>
    <property type="molecule type" value="Genomic_DNA"/>
</dbReference>
<dbReference type="EMBL" id="BC066936">
    <property type="protein sequence ID" value="AAH66936.1"/>
    <property type="molecule type" value="mRNA"/>
</dbReference>
<dbReference type="EMBL" id="BC066969">
    <property type="protein sequence ID" value="AAH66969.1"/>
    <property type="molecule type" value="mRNA"/>
</dbReference>
<dbReference type="CCDS" id="CCDS1759.1">
    <molecule id="Q6ZUS5-1"/>
</dbReference>
<dbReference type="CCDS" id="CCDS46247.1">
    <molecule id="Q6ZUS5-2"/>
</dbReference>
<dbReference type="RefSeq" id="NP_001136155.1">
    <molecule id="Q6ZUS5-2"/>
    <property type="nucleotide sequence ID" value="NM_001142683.3"/>
</dbReference>
<dbReference type="RefSeq" id="NP_078860.2">
    <molecule id="Q6ZUS5-1"/>
    <property type="nucleotide sequence ID" value="NM_024584.4"/>
</dbReference>
<dbReference type="SMR" id="Q6ZUS5"/>
<dbReference type="BioGRID" id="122765">
    <property type="interactions" value="12"/>
</dbReference>
<dbReference type="FunCoup" id="Q6ZUS5">
    <property type="interactions" value="75"/>
</dbReference>
<dbReference type="IntAct" id="Q6ZUS5">
    <property type="interactions" value="12"/>
</dbReference>
<dbReference type="MINT" id="Q6ZUS5"/>
<dbReference type="STRING" id="9606.ENSP00000412150"/>
<dbReference type="iPTMnet" id="Q6ZUS5"/>
<dbReference type="PhosphoSitePlus" id="Q6ZUS5"/>
<dbReference type="BioMuta" id="CCDC121"/>
<dbReference type="DMDM" id="74738330"/>
<dbReference type="jPOST" id="Q6ZUS5"/>
<dbReference type="MassIVE" id="Q6ZUS5"/>
<dbReference type="PaxDb" id="9606-ENSP00000412150"/>
<dbReference type="PeptideAtlas" id="Q6ZUS5"/>
<dbReference type="ProteomicsDB" id="68348">
    <molecule id="Q6ZUS5-1"/>
</dbReference>
<dbReference type="Antibodypedia" id="56093">
    <property type="antibodies" value="30 antibodies from 10 providers"/>
</dbReference>
<dbReference type="DNASU" id="79635"/>
<dbReference type="Ensembl" id="ENST00000324364.4">
    <molecule id="Q6ZUS5-1"/>
    <property type="protein sequence ID" value="ENSP00000339087.2"/>
    <property type="gene ID" value="ENSG00000176714.10"/>
</dbReference>
<dbReference type="Ensembl" id="ENST00000394775.3">
    <molecule id="Q6ZUS5-2"/>
    <property type="protein sequence ID" value="ENSP00000412150.2"/>
    <property type="gene ID" value="ENSG00000176714.10"/>
</dbReference>
<dbReference type="GeneID" id="79635"/>
<dbReference type="KEGG" id="hsa:79635"/>
<dbReference type="MANE-Select" id="ENST00000324364.4">
    <property type="protein sequence ID" value="ENSP00000339087.2"/>
    <property type="RefSeq nucleotide sequence ID" value="NM_024584.5"/>
    <property type="RefSeq protein sequence ID" value="NP_078860.2"/>
</dbReference>
<dbReference type="UCSC" id="uc002rld.4">
    <molecule id="Q6ZUS5-1"/>
    <property type="organism name" value="human"/>
</dbReference>
<dbReference type="AGR" id="HGNC:25833"/>
<dbReference type="CTD" id="79635"/>
<dbReference type="DisGeNET" id="79635"/>
<dbReference type="GeneCards" id="CCDC121"/>
<dbReference type="HGNC" id="HGNC:25833">
    <property type="gene designation" value="CCDC121"/>
</dbReference>
<dbReference type="HPA" id="ENSG00000176714">
    <property type="expression patterns" value="Tissue enhanced (testis)"/>
</dbReference>
<dbReference type="neXtProt" id="NX_Q6ZUS5"/>
<dbReference type="OpenTargets" id="ENSG00000176714"/>
<dbReference type="PharmGKB" id="PA147358222"/>
<dbReference type="VEuPathDB" id="HostDB:ENSG00000176714"/>
<dbReference type="eggNOG" id="ENOG502RXQ4">
    <property type="taxonomic scope" value="Eukaryota"/>
</dbReference>
<dbReference type="GeneTree" id="ENSGT00940000163171"/>
<dbReference type="HOGENOM" id="CLU_047789_0_0_1"/>
<dbReference type="InParanoid" id="Q6ZUS5"/>
<dbReference type="OrthoDB" id="9625750at2759"/>
<dbReference type="PAN-GO" id="Q6ZUS5">
    <property type="GO annotations" value="0 GO annotations based on evolutionary models"/>
</dbReference>
<dbReference type="PhylomeDB" id="Q6ZUS5"/>
<dbReference type="TreeFam" id="TF350484"/>
<dbReference type="PathwayCommons" id="Q6ZUS5"/>
<dbReference type="SignaLink" id="Q6ZUS5"/>
<dbReference type="BioGRID-ORCS" id="79635">
    <property type="hits" value="15 hits in 1149 CRISPR screens"/>
</dbReference>
<dbReference type="GenomeRNAi" id="79635"/>
<dbReference type="Pharos" id="Q6ZUS5">
    <property type="development level" value="Tdark"/>
</dbReference>
<dbReference type="PRO" id="PR:Q6ZUS5"/>
<dbReference type="Proteomes" id="UP000005640">
    <property type="component" value="Chromosome 2"/>
</dbReference>
<dbReference type="RNAct" id="Q6ZUS5">
    <property type="molecule type" value="protein"/>
</dbReference>
<dbReference type="Bgee" id="ENSG00000176714">
    <property type="expression patterns" value="Expressed in secondary oocyte and 131 other cell types or tissues"/>
</dbReference>
<dbReference type="ExpressionAtlas" id="Q6ZUS5">
    <property type="expression patterns" value="baseline and differential"/>
</dbReference>
<dbReference type="InterPro" id="IPR032777">
    <property type="entry name" value="DUF4515"/>
</dbReference>
<dbReference type="PANTHER" id="PTHR14845">
    <property type="entry name" value="COILED-COIL DOMAIN-CONTAINING 166"/>
    <property type="match status" value="1"/>
</dbReference>
<dbReference type="PANTHER" id="PTHR14845:SF9">
    <property type="entry name" value="COILED-COIL DOMAIN-CONTAINING PROTEIN 121"/>
    <property type="match status" value="1"/>
</dbReference>
<dbReference type="Pfam" id="PF14988">
    <property type="entry name" value="DUF4515"/>
    <property type="match status" value="1"/>
</dbReference>
<gene>
    <name type="primary">CCDC121</name>
</gene>
<organism>
    <name type="scientific">Homo sapiens</name>
    <name type="common">Human</name>
    <dbReference type="NCBI Taxonomy" id="9606"/>
    <lineage>
        <taxon>Eukaryota</taxon>
        <taxon>Metazoa</taxon>
        <taxon>Chordata</taxon>
        <taxon>Craniata</taxon>
        <taxon>Vertebrata</taxon>
        <taxon>Euteleostomi</taxon>
        <taxon>Mammalia</taxon>
        <taxon>Eutheria</taxon>
        <taxon>Euarchontoglires</taxon>
        <taxon>Primates</taxon>
        <taxon>Haplorrhini</taxon>
        <taxon>Catarrhini</taxon>
        <taxon>Hominidae</taxon>
        <taxon>Homo</taxon>
    </lineage>
</organism>
<keyword id="KW-0025">Alternative splicing</keyword>
<keyword id="KW-0175">Coiled coil</keyword>
<keyword id="KW-1267">Proteomics identification</keyword>
<keyword id="KW-1185">Reference proteome</keyword>
<accession>Q6ZUS5</accession>
<accession>B3KW66</accession>
<accession>J3KQZ8</accession>
<accession>Q9H8G6</accession>